<dbReference type="EC" id="4.1.3.17"/>
<dbReference type="EC" id="4.1.1.112"/>
<dbReference type="EMBL" id="AE017221">
    <property type="protein sequence ID" value="AAS81300.1"/>
    <property type="molecule type" value="Genomic_DNA"/>
</dbReference>
<dbReference type="RefSeq" id="WP_011173379.1">
    <property type="nucleotide sequence ID" value="NC_005835.1"/>
</dbReference>
<dbReference type="SMR" id="Q72J23"/>
<dbReference type="KEGG" id="tth:TT_C0958"/>
<dbReference type="eggNOG" id="COG0684">
    <property type="taxonomic scope" value="Bacteria"/>
</dbReference>
<dbReference type="HOGENOM" id="CLU_072626_4_0_0"/>
<dbReference type="OrthoDB" id="9784786at2"/>
<dbReference type="Proteomes" id="UP000000592">
    <property type="component" value="Chromosome"/>
</dbReference>
<dbReference type="GO" id="GO:0047443">
    <property type="term" value="F:4-hydroxy-4-methyl-2-oxoglutarate aldolase activity"/>
    <property type="evidence" value="ECO:0007669"/>
    <property type="project" value="UniProtKB-EC"/>
</dbReference>
<dbReference type="GO" id="GO:0046872">
    <property type="term" value="F:metal ion binding"/>
    <property type="evidence" value="ECO:0007669"/>
    <property type="project" value="UniProtKB-KW"/>
</dbReference>
<dbReference type="GO" id="GO:0008948">
    <property type="term" value="F:oxaloacetate decarboxylase activity"/>
    <property type="evidence" value="ECO:0007669"/>
    <property type="project" value="UniProtKB-EC"/>
</dbReference>
<dbReference type="GO" id="GO:0008428">
    <property type="term" value="F:ribonuclease inhibitor activity"/>
    <property type="evidence" value="ECO:0007669"/>
    <property type="project" value="InterPro"/>
</dbReference>
<dbReference type="GO" id="GO:0051252">
    <property type="term" value="P:regulation of RNA metabolic process"/>
    <property type="evidence" value="ECO:0007669"/>
    <property type="project" value="InterPro"/>
</dbReference>
<dbReference type="CDD" id="cd16841">
    <property type="entry name" value="RraA_family"/>
    <property type="match status" value="1"/>
</dbReference>
<dbReference type="Gene3D" id="3.50.30.40">
    <property type="entry name" value="Ribonuclease E inhibitor RraA/RraA-like"/>
    <property type="match status" value="1"/>
</dbReference>
<dbReference type="InterPro" id="IPR010203">
    <property type="entry name" value="RraA"/>
</dbReference>
<dbReference type="InterPro" id="IPR005493">
    <property type="entry name" value="RraA/RraA-like"/>
</dbReference>
<dbReference type="InterPro" id="IPR036704">
    <property type="entry name" value="RraA/RraA-like_sf"/>
</dbReference>
<dbReference type="NCBIfam" id="TIGR01935">
    <property type="entry name" value="NOT-MenG"/>
    <property type="match status" value="1"/>
</dbReference>
<dbReference type="NCBIfam" id="NF006875">
    <property type="entry name" value="PRK09372.1"/>
    <property type="match status" value="1"/>
</dbReference>
<dbReference type="PANTHER" id="PTHR33254">
    <property type="entry name" value="4-HYDROXY-4-METHYL-2-OXOGLUTARATE ALDOLASE 3-RELATED"/>
    <property type="match status" value="1"/>
</dbReference>
<dbReference type="PANTHER" id="PTHR33254:SF4">
    <property type="entry name" value="4-HYDROXY-4-METHYL-2-OXOGLUTARATE ALDOLASE 3-RELATED"/>
    <property type="match status" value="1"/>
</dbReference>
<dbReference type="Pfam" id="PF03737">
    <property type="entry name" value="RraA-like"/>
    <property type="match status" value="1"/>
</dbReference>
<dbReference type="SUPFAM" id="SSF89562">
    <property type="entry name" value="RraA-like"/>
    <property type="match status" value="1"/>
</dbReference>
<gene>
    <name type="ordered locus">TT_C0958</name>
</gene>
<name>RRAAH_THET2</name>
<proteinExistence type="inferred from homology"/>
<comment type="function">
    <text evidence="1">Catalyzes the aldol cleavage of 4-hydroxy-4-methyl-2-oxoglutarate (HMG) into 2 molecules of pyruvate. Also contains a secondary oxaloacetate (OAA) decarboxylase activity due to the common pyruvate enolate transition state formed following C-C bond cleavage in the retro-aldol and decarboxylation reactions (By similarity).</text>
</comment>
<comment type="catalytic activity">
    <reaction>
        <text>4-hydroxy-4-methyl-2-oxoglutarate = 2 pyruvate</text>
        <dbReference type="Rhea" id="RHEA:22748"/>
        <dbReference type="ChEBI" id="CHEBI:15361"/>
        <dbReference type="ChEBI" id="CHEBI:58276"/>
        <dbReference type="EC" id="4.1.3.17"/>
    </reaction>
</comment>
<comment type="catalytic activity">
    <reaction>
        <text>oxaloacetate + H(+) = pyruvate + CO2</text>
        <dbReference type="Rhea" id="RHEA:15641"/>
        <dbReference type="ChEBI" id="CHEBI:15361"/>
        <dbReference type="ChEBI" id="CHEBI:15378"/>
        <dbReference type="ChEBI" id="CHEBI:16452"/>
        <dbReference type="ChEBI" id="CHEBI:16526"/>
        <dbReference type="EC" id="4.1.1.112"/>
    </reaction>
</comment>
<comment type="cofactor">
    <cofactor evidence="1">
        <name>a divalent metal cation</name>
        <dbReference type="ChEBI" id="CHEBI:60240"/>
    </cofactor>
    <text evidence="1">Divalent metal cation.</text>
</comment>
<comment type="subunit">
    <text evidence="1">Homotrimer.</text>
</comment>
<comment type="similarity">
    <text evidence="2">Belongs to the class II aldolase/RraA-like family.</text>
</comment>
<accession>Q72J23</accession>
<reference key="1">
    <citation type="journal article" date="2004" name="Nat. Biotechnol.">
        <title>The genome sequence of the extreme thermophile Thermus thermophilus.</title>
        <authorList>
            <person name="Henne A."/>
            <person name="Brueggemann H."/>
            <person name="Raasch C."/>
            <person name="Wiezer A."/>
            <person name="Hartsch T."/>
            <person name="Liesegang H."/>
            <person name="Johann A."/>
            <person name="Lienard T."/>
            <person name="Gohl O."/>
            <person name="Martinez-Arias R."/>
            <person name="Jacobi C."/>
            <person name="Starkuviene V."/>
            <person name="Schlenczeck S."/>
            <person name="Dencker S."/>
            <person name="Huber R."/>
            <person name="Klenk H.-P."/>
            <person name="Kramer W."/>
            <person name="Merkl R."/>
            <person name="Gottschalk G."/>
            <person name="Fritz H.-J."/>
        </authorList>
    </citation>
    <scope>NUCLEOTIDE SEQUENCE [LARGE SCALE GENOMIC DNA]</scope>
    <source>
        <strain>ATCC BAA-163 / DSM 7039 / HB27</strain>
    </source>
</reference>
<sequence length="164" mass="17301">MEARTTDLSDLYPEGEALPMVFKSFGGRARFAGRVRTLRVFEDNALVRKVLEEEGAGQVLFVDGGGSLRTALLGGNLARLAWERGWAGVVVHGAVRDTEELRGVPIGLLALAATPKKSAKEGKGEVDVPLKVLGVEVLPGSFLLADEDGLLLLPEPPSGVRSGG</sequence>
<evidence type="ECO:0000250" key="1"/>
<evidence type="ECO:0000305" key="2"/>
<protein>
    <recommendedName>
        <fullName>Putative 4-hydroxy-4-methyl-2-oxoglutarate aldolase</fullName>
        <shortName>HMG aldolase</shortName>
        <ecNumber>4.1.3.17</ecNumber>
    </recommendedName>
    <alternativeName>
        <fullName>Oxaloacetate decarboxylase</fullName>
        <shortName>OAA decarboxylase</shortName>
        <ecNumber>4.1.1.112</ecNumber>
    </alternativeName>
    <alternativeName>
        <fullName>Regulator of ribonuclease activity homolog</fullName>
    </alternativeName>
    <alternativeName>
        <fullName>RraA-like protein</fullName>
    </alternativeName>
</protein>
<organism>
    <name type="scientific">Thermus thermophilus (strain ATCC BAA-163 / DSM 7039 / HB27)</name>
    <dbReference type="NCBI Taxonomy" id="262724"/>
    <lineage>
        <taxon>Bacteria</taxon>
        <taxon>Thermotogati</taxon>
        <taxon>Deinococcota</taxon>
        <taxon>Deinococci</taxon>
        <taxon>Thermales</taxon>
        <taxon>Thermaceae</taxon>
        <taxon>Thermus</taxon>
    </lineage>
</organism>
<keyword id="KW-0456">Lyase</keyword>
<keyword id="KW-0479">Metal-binding</keyword>
<feature type="chain" id="PRO_0000209639" description="Putative 4-hydroxy-4-methyl-2-oxoglutarate aldolase">
    <location>
        <begin position="1"/>
        <end position="164"/>
    </location>
</feature>
<feature type="binding site" evidence="1">
    <location>
        <begin position="74"/>
        <end position="77"/>
    </location>
    <ligand>
        <name>substrate</name>
    </ligand>
</feature>
<feature type="binding site" evidence="1">
    <location>
        <position position="96"/>
    </location>
    <ligand>
        <name>substrate</name>
    </ligand>
</feature>
<feature type="binding site" evidence="1">
    <location>
        <position position="97"/>
    </location>
    <ligand>
        <name>a divalent metal cation</name>
        <dbReference type="ChEBI" id="CHEBI:60240"/>
    </ligand>
</feature>